<keyword id="KW-0030">Aminoacyl-tRNA synthetase</keyword>
<keyword id="KW-0067">ATP-binding</keyword>
<keyword id="KW-0963">Cytoplasm</keyword>
<keyword id="KW-0436">Ligase</keyword>
<keyword id="KW-0547">Nucleotide-binding</keyword>
<keyword id="KW-0648">Protein biosynthesis</keyword>
<keyword id="KW-1185">Reference proteome</keyword>
<comment type="catalytic activity">
    <reaction evidence="1">
        <text>tRNA(Arg) + L-arginine + ATP = L-arginyl-tRNA(Arg) + AMP + diphosphate</text>
        <dbReference type="Rhea" id="RHEA:20301"/>
        <dbReference type="Rhea" id="RHEA-COMP:9658"/>
        <dbReference type="Rhea" id="RHEA-COMP:9673"/>
        <dbReference type="ChEBI" id="CHEBI:30616"/>
        <dbReference type="ChEBI" id="CHEBI:32682"/>
        <dbReference type="ChEBI" id="CHEBI:33019"/>
        <dbReference type="ChEBI" id="CHEBI:78442"/>
        <dbReference type="ChEBI" id="CHEBI:78513"/>
        <dbReference type="ChEBI" id="CHEBI:456215"/>
        <dbReference type="EC" id="6.1.1.19"/>
    </reaction>
</comment>
<comment type="subunit">
    <text evidence="1">Monomer.</text>
</comment>
<comment type="subcellular location">
    <subcellularLocation>
        <location evidence="1">Cytoplasm</location>
    </subcellularLocation>
</comment>
<comment type="similarity">
    <text evidence="1">Belongs to the class-I aminoacyl-tRNA synthetase family.</text>
</comment>
<proteinExistence type="inferred from homology"/>
<gene>
    <name evidence="1" type="primary">argS</name>
    <name type="ordered locus">Plut_2092</name>
</gene>
<accession>Q3B147</accession>
<dbReference type="EC" id="6.1.1.19" evidence="1"/>
<dbReference type="EMBL" id="CP000096">
    <property type="protein sequence ID" value="ABB24934.1"/>
    <property type="molecule type" value="Genomic_DNA"/>
</dbReference>
<dbReference type="RefSeq" id="WP_011358804.1">
    <property type="nucleotide sequence ID" value="NC_007512.1"/>
</dbReference>
<dbReference type="SMR" id="Q3B147"/>
<dbReference type="STRING" id="319225.Plut_2092"/>
<dbReference type="KEGG" id="plt:Plut_2092"/>
<dbReference type="eggNOG" id="COG0018">
    <property type="taxonomic scope" value="Bacteria"/>
</dbReference>
<dbReference type="HOGENOM" id="CLU_006406_0_1_10"/>
<dbReference type="OrthoDB" id="9805987at2"/>
<dbReference type="Proteomes" id="UP000002709">
    <property type="component" value="Chromosome"/>
</dbReference>
<dbReference type="GO" id="GO:0005737">
    <property type="term" value="C:cytoplasm"/>
    <property type="evidence" value="ECO:0007669"/>
    <property type="project" value="UniProtKB-SubCell"/>
</dbReference>
<dbReference type="GO" id="GO:0004814">
    <property type="term" value="F:arginine-tRNA ligase activity"/>
    <property type="evidence" value="ECO:0007669"/>
    <property type="project" value="UniProtKB-UniRule"/>
</dbReference>
<dbReference type="GO" id="GO:0005524">
    <property type="term" value="F:ATP binding"/>
    <property type="evidence" value="ECO:0007669"/>
    <property type="project" value="UniProtKB-UniRule"/>
</dbReference>
<dbReference type="GO" id="GO:0006420">
    <property type="term" value="P:arginyl-tRNA aminoacylation"/>
    <property type="evidence" value="ECO:0007669"/>
    <property type="project" value="UniProtKB-UniRule"/>
</dbReference>
<dbReference type="FunFam" id="1.10.730.10:FF:000006">
    <property type="entry name" value="Arginyl-tRNA synthetase 2, mitochondrial"/>
    <property type="match status" value="1"/>
</dbReference>
<dbReference type="Gene3D" id="3.30.1360.70">
    <property type="entry name" value="Arginyl tRNA synthetase N-terminal domain"/>
    <property type="match status" value="1"/>
</dbReference>
<dbReference type="Gene3D" id="3.40.50.620">
    <property type="entry name" value="HUPs"/>
    <property type="match status" value="1"/>
</dbReference>
<dbReference type="Gene3D" id="1.10.730.10">
    <property type="entry name" value="Isoleucyl-tRNA Synthetase, Domain 1"/>
    <property type="match status" value="1"/>
</dbReference>
<dbReference type="HAMAP" id="MF_00123">
    <property type="entry name" value="Arg_tRNA_synth"/>
    <property type="match status" value="1"/>
</dbReference>
<dbReference type="InterPro" id="IPR001278">
    <property type="entry name" value="Arg-tRNA-ligase"/>
</dbReference>
<dbReference type="InterPro" id="IPR005148">
    <property type="entry name" value="Arg-tRNA-synth_N"/>
</dbReference>
<dbReference type="InterPro" id="IPR036695">
    <property type="entry name" value="Arg-tRNA-synth_N_sf"/>
</dbReference>
<dbReference type="InterPro" id="IPR035684">
    <property type="entry name" value="ArgRS_core"/>
</dbReference>
<dbReference type="InterPro" id="IPR008909">
    <property type="entry name" value="DALR_anticod-bd"/>
</dbReference>
<dbReference type="InterPro" id="IPR014729">
    <property type="entry name" value="Rossmann-like_a/b/a_fold"/>
</dbReference>
<dbReference type="InterPro" id="IPR009080">
    <property type="entry name" value="tRNAsynth_Ia_anticodon-bd"/>
</dbReference>
<dbReference type="NCBIfam" id="TIGR00456">
    <property type="entry name" value="argS"/>
    <property type="match status" value="1"/>
</dbReference>
<dbReference type="PANTHER" id="PTHR11956:SF5">
    <property type="entry name" value="ARGININE--TRNA LIGASE, CYTOPLASMIC"/>
    <property type="match status" value="1"/>
</dbReference>
<dbReference type="PANTHER" id="PTHR11956">
    <property type="entry name" value="ARGINYL-TRNA SYNTHETASE"/>
    <property type="match status" value="1"/>
</dbReference>
<dbReference type="Pfam" id="PF03485">
    <property type="entry name" value="Arg_tRNA_synt_N"/>
    <property type="match status" value="1"/>
</dbReference>
<dbReference type="Pfam" id="PF05746">
    <property type="entry name" value="DALR_1"/>
    <property type="match status" value="1"/>
</dbReference>
<dbReference type="Pfam" id="PF00750">
    <property type="entry name" value="tRNA-synt_1d"/>
    <property type="match status" value="1"/>
</dbReference>
<dbReference type="PRINTS" id="PR01038">
    <property type="entry name" value="TRNASYNTHARG"/>
</dbReference>
<dbReference type="SMART" id="SM01016">
    <property type="entry name" value="Arg_tRNA_synt_N"/>
    <property type="match status" value="1"/>
</dbReference>
<dbReference type="SMART" id="SM00836">
    <property type="entry name" value="DALR_1"/>
    <property type="match status" value="1"/>
</dbReference>
<dbReference type="SUPFAM" id="SSF47323">
    <property type="entry name" value="Anticodon-binding domain of a subclass of class I aminoacyl-tRNA synthetases"/>
    <property type="match status" value="1"/>
</dbReference>
<dbReference type="SUPFAM" id="SSF55190">
    <property type="entry name" value="Arginyl-tRNA synthetase (ArgRS), N-terminal 'additional' domain"/>
    <property type="match status" value="1"/>
</dbReference>
<dbReference type="SUPFAM" id="SSF52374">
    <property type="entry name" value="Nucleotidylyl transferase"/>
    <property type="match status" value="1"/>
</dbReference>
<protein>
    <recommendedName>
        <fullName evidence="1">Arginine--tRNA ligase</fullName>
        <ecNumber evidence="1">6.1.1.19</ecNumber>
    </recommendedName>
    <alternativeName>
        <fullName evidence="1">Arginyl-tRNA synthetase</fullName>
        <shortName evidence="1">ArgRS</shortName>
    </alternativeName>
</protein>
<reference key="1">
    <citation type="submission" date="2005-08" db="EMBL/GenBank/DDBJ databases">
        <title>Complete sequence of Pelodictyon luteolum DSM 273.</title>
        <authorList>
            <consortium name="US DOE Joint Genome Institute"/>
            <person name="Copeland A."/>
            <person name="Lucas S."/>
            <person name="Lapidus A."/>
            <person name="Barry K."/>
            <person name="Detter J.C."/>
            <person name="Glavina T."/>
            <person name="Hammon N."/>
            <person name="Israni S."/>
            <person name="Pitluck S."/>
            <person name="Bryant D."/>
            <person name="Schmutz J."/>
            <person name="Larimer F."/>
            <person name="Land M."/>
            <person name="Kyrpides N."/>
            <person name="Ivanova N."/>
            <person name="Richardson P."/>
        </authorList>
    </citation>
    <scope>NUCLEOTIDE SEQUENCE [LARGE SCALE GENOMIC DNA]</scope>
    <source>
        <strain>DSM 273 / BCRC 81028 / 2530</strain>
    </source>
</reference>
<organism>
    <name type="scientific">Chlorobium luteolum (strain DSM 273 / BCRC 81028 / 2530)</name>
    <name type="common">Pelodictyon luteolum</name>
    <dbReference type="NCBI Taxonomy" id="319225"/>
    <lineage>
        <taxon>Bacteria</taxon>
        <taxon>Pseudomonadati</taxon>
        <taxon>Chlorobiota</taxon>
        <taxon>Chlorobiia</taxon>
        <taxon>Chlorobiales</taxon>
        <taxon>Chlorobiaceae</taxon>
        <taxon>Chlorobium/Pelodictyon group</taxon>
        <taxon>Pelodictyon</taxon>
    </lineage>
</organism>
<sequence>MQSFLVAEIQNALRSASVTTGQSIIIEKPTSPKFGDYATNIAFLAAKELKRNPRQLAEELTGHFRFPEGTVTKTEVAGPGFINFFMEPAFIMQSAERVFREGAEYGKGREGQGKTAIVEYVSANPTGPLTIGRGRGGVLGDCIANLAEAQGYHVNREYYFNDAGRQMQILGESVRYRYMELCGRTIDFPDTHYKGGYIGEIAEKIHSEHGEDLLHVESIEPFRSEAESIIFSSIQKTLGRLGIVHDSFFNEHTLYTADLNGISPNQNVIDRLREKGFIGEYDGATWFLTTKLGQEKDKVLIKSSGEPSYRLPDIAYHVTKYARGFDMIINVFGADHIDEYPDVLEALKILGHDTAHVRIAINQFVTTTVNGETVKMSTRKGNADLLDDLIDDVGPDATRLFFIMRSKDSHLNFDVELAKKQSKDNPVFYLQYAHARICSLLRLAWSEIGFDAAKRPEPGVLMRLTTPEELQLAFGILDFGEASRSAFRMLEPQKMVDYMHSIAELFHRFYQECPILKAEPEIAEARLFLAVAVRQVLQNGFRILGISAPESM</sequence>
<name>SYR_CHLL3</name>
<evidence type="ECO:0000255" key="1">
    <source>
        <dbReference type="HAMAP-Rule" id="MF_00123"/>
    </source>
</evidence>
<feature type="chain" id="PRO_0000242063" description="Arginine--tRNA ligase">
    <location>
        <begin position="1"/>
        <end position="552"/>
    </location>
</feature>
<feature type="short sequence motif" description="'HIGH' region">
    <location>
        <begin position="123"/>
        <end position="133"/>
    </location>
</feature>